<comment type="function">
    <text evidence="1">GTPase-activating protein for rhoa and cdc42.</text>
</comment>
<comment type="subcellular location">
    <subcellularLocation>
        <location evidence="1">Cell junction</location>
        <location evidence="1">Focal adhesion</location>
    </subcellularLocation>
    <subcellularLocation>
        <location evidence="1">Cytoplasm</location>
        <location evidence="1">Cytoskeleton</location>
    </subcellularLocation>
    <subcellularLocation>
        <location evidence="3">Endosome membrane</location>
    </subcellularLocation>
    <text evidence="1">Colocalizes with actin stress fibers and cortical actin structures.</text>
</comment>
<comment type="alternative products">
    <event type="alternative splicing"/>
    <isoform>
        <id>B5DFQ4-1</id>
        <name>1</name>
        <sequence type="displayed"/>
    </isoform>
    <isoform>
        <id>B5DFQ4-2</id>
        <name>2</name>
        <sequence type="described" ref="VSP_035910 VSP_035911"/>
    </isoform>
</comment>
<reference key="1">
    <citation type="submission" date="2008-08" db="EMBL/GenBank/DDBJ databases">
        <authorList>
            <consortium name="NIH - Xenopus Gene Collection (XGC) project"/>
        </authorList>
    </citation>
    <scope>NUCLEOTIDE SEQUENCE [LARGE SCALE MRNA] (ISOFORMS 1 AND 2)</scope>
    <source>
        <strain>N6</strain>
        <tissue>Embryo</tissue>
        <tissue>Intestine</tissue>
    </source>
</reference>
<evidence type="ECO:0000250" key="1"/>
<evidence type="ECO:0000250" key="2">
    <source>
        <dbReference type="UniProtKB" id="A1A4S6"/>
    </source>
</evidence>
<evidence type="ECO:0000250" key="3">
    <source>
        <dbReference type="UniProtKB" id="Q9UNA1"/>
    </source>
</evidence>
<evidence type="ECO:0000255" key="4">
    <source>
        <dbReference type="PROSITE-ProRule" id="PRU00145"/>
    </source>
</evidence>
<evidence type="ECO:0000255" key="5">
    <source>
        <dbReference type="PROSITE-ProRule" id="PRU00172"/>
    </source>
</evidence>
<evidence type="ECO:0000255" key="6">
    <source>
        <dbReference type="PROSITE-ProRule" id="PRU00192"/>
    </source>
</evidence>
<evidence type="ECO:0000256" key="7">
    <source>
        <dbReference type="SAM" id="MobiDB-lite"/>
    </source>
</evidence>
<evidence type="ECO:0000303" key="8">
    <source ref="1"/>
</evidence>
<keyword id="KW-0025">Alternative splicing</keyword>
<keyword id="KW-0965">Cell junction</keyword>
<keyword id="KW-0963">Cytoplasm</keyword>
<keyword id="KW-0206">Cytoskeleton</keyword>
<keyword id="KW-0967">Endosome</keyword>
<keyword id="KW-0343">GTPase activation</keyword>
<keyword id="KW-0472">Membrane</keyword>
<keyword id="KW-1185">Reference proteome</keyword>
<keyword id="KW-0728">SH3 domain</keyword>
<organism>
    <name type="scientific">Xenopus tropicalis</name>
    <name type="common">Western clawed frog</name>
    <name type="synonym">Silurana tropicalis</name>
    <dbReference type="NCBI Taxonomy" id="8364"/>
    <lineage>
        <taxon>Eukaryota</taxon>
        <taxon>Metazoa</taxon>
        <taxon>Chordata</taxon>
        <taxon>Craniata</taxon>
        <taxon>Vertebrata</taxon>
        <taxon>Euteleostomi</taxon>
        <taxon>Amphibia</taxon>
        <taxon>Batrachia</taxon>
        <taxon>Anura</taxon>
        <taxon>Pipoidea</taxon>
        <taxon>Pipidae</taxon>
        <taxon>Xenopodinae</taxon>
        <taxon>Xenopus</taxon>
        <taxon>Silurana</taxon>
    </lineage>
</organism>
<dbReference type="EMBL" id="BC160445">
    <property type="protein sequence ID" value="AAI60445.1"/>
    <property type="molecule type" value="mRNA"/>
</dbReference>
<dbReference type="EMBL" id="BC169150">
    <property type="protein sequence ID" value="AAI69150.1"/>
    <property type="molecule type" value="mRNA"/>
</dbReference>
<dbReference type="RefSeq" id="NP_001120245.2">
    <molecule id="B5DFQ4-1"/>
    <property type="nucleotide sequence ID" value="NM_001126773.2"/>
</dbReference>
<dbReference type="SMR" id="B5DFQ4"/>
<dbReference type="FunCoup" id="B5DFQ4">
    <property type="interactions" value="676"/>
</dbReference>
<dbReference type="STRING" id="8364.ENSXETP00000019434"/>
<dbReference type="PaxDb" id="8364-ENSXETP00000043683"/>
<dbReference type="GeneID" id="100145296"/>
<dbReference type="KEGG" id="xtr:100145296"/>
<dbReference type="AGR" id="Xenbase:XB-GENE-1011980"/>
<dbReference type="CTD" id="23092"/>
<dbReference type="Xenbase" id="XB-GENE-1011980">
    <property type="gene designation" value="arhgap26"/>
</dbReference>
<dbReference type="eggNOG" id="KOG1451">
    <property type="taxonomic scope" value="Eukaryota"/>
</dbReference>
<dbReference type="HOGENOM" id="CLU_011532_2_0_1"/>
<dbReference type="InParanoid" id="B5DFQ4"/>
<dbReference type="OrthoDB" id="3183924at2759"/>
<dbReference type="Reactome" id="R-XTR-8980692">
    <property type="pathway name" value="RHOA GTPase cycle"/>
</dbReference>
<dbReference type="Reactome" id="R-XTR-9013026">
    <property type="pathway name" value="RHOB GTPase cycle"/>
</dbReference>
<dbReference type="Reactome" id="R-XTR-9013148">
    <property type="pathway name" value="CDC42 GTPase cycle"/>
</dbReference>
<dbReference type="Reactome" id="R-XTR-9013149">
    <property type="pathway name" value="RAC1 GTPase cycle"/>
</dbReference>
<dbReference type="Reactome" id="R-XTR-9013404">
    <property type="pathway name" value="RAC2 GTPase cycle"/>
</dbReference>
<dbReference type="Reactome" id="R-XTR-9013405">
    <property type="pathway name" value="RHOD GTPase cycle"/>
</dbReference>
<dbReference type="Reactome" id="R-XTR-9013406">
    <property type="pathway name" value="RHOQ GTPase cycle"/>
</dbReference>
<dbReference type="Reactome" id="R-XTR-9013409">
    <property type="pathway name" value="RHOJ GTPase cycle"/>
</dbReference>
<dbReference type="Reactome" id="R-XTR-9013423">
    <property type="pathway name" value="RAC3 GTPase cycle"/>
</dbReference>
<dbReference type="Proteomes" id="UP000008143">
    <property type="component" value="Chromosome 3"/>
</dbReference>
<dbReference type="Bgee" id="ENSXETG00000001880">
    <property type="expression patterns" value="Expressed in 4-cell stage embryo and 13 other cell types or tissues"/>
</dbReference>
<dbReference type="ExpressionAtlas" id="B5DFQ4">
    <property type="expression patterns" value="baseline"/>
</dbReference>
<dbReference type="GO" id="GO:0005856">
    <property type="term" value="C:cytoskeleton"/>
    <property type="evidence" value="ECO:0007669"/>
    <property type="project" value="UniProtKB-SubCell"/>
</dbReference>
<dbReference type="GO" id="GO:0005829">
    <property type="term" value="C:cytosol"/>
    <property type="evidence" value="ECO:0000250"/>
    <property type="project" value="UniProtKB"/>
</dbReference>
<dbReference type="GO" id="GO:0010008">
    <property type="term" value="C:endosome membrane"/>
    <property type="evidence" value="ECO:0000250"/>
    <property type="project" value="UniProtKB"/>
</dbReference>
<dbReference type="GO" id="GO:0005925">
    <property type="term" value="C:focal adhesion"/>
    <property type="evidence" value="ECO:0007669"/>
    <property type="project" value="UniProtKB-SubCell"/>
</dbReference>
<dbReference type="GO" id="GO:0005096">
    <property type="term" value="F:GTPase activator activity"/>
    <property type="evidence" value="ECO:0007669"/>
    <property type="project" value="UniProtKB-KW"/>
</dbReference>
<dbReference type="GO" id="GO:0007165">
    <property type="term" value="P:signal transduction"/>
    <property type="evidence" value="ECO:0007669"/>
    <property type="project" value="InterPro"/>
</dbReference>
<dbReference type="CDD" id="cd01249">
    <property type="entry name" value="BAR-PH_GRAF_family"/>
    <property type="match status" value="1"/>
</dbReference>
<dbReference type="CDD" id="cd07636">
    <property type="entry name" value="BAR_GRAF"/>
    <property type="match status" value="1"/>
</dbReference>
<dbReference type="CDD" id="cd04374">
    <property type="entry name" value="RhoGAP_Graf"/>
    <property type="match status" value="1"/>
</dbReference>
<dbReference type="CDD" id="cd12064">
    <property type="entry name" value="SH3_GRAF"/>
    <property type="match status" value="1"/>
</dbReference>
<dbReference type="FunFam" id="1.10.555.10:FF:000006">
    <property type="entry name" value="Rho GTPase activating protein 26"/>
    <property type="match status" value="1"/>
</dbReference>
<dbReference type="FunFam" id="2.30.29.30:FF:000116">
    <property type="entry name" value="Rho GTPase activating protein 26"/>
    <property type="match status" value="1"/>
</dbReference>
<dbReference type="FunFam" id="1.20.1270.60:FF:000001">
    <property type="entry name" value="Rho GTPase-activating protein 26"/>
    <property type="match status" value="1"/>
</dbReference>
<dbReference type="FunFam" id="2.30.30.40:FF:000055">
    <property type="entry name" value="rho GTPase-activating protein 26 isoform X1"/>
    <property type="match status" value="1"/>
</dbReference>
<dbReference type="Gene3D" id="1.20.1270.60">
    <property type="entry name" value="Arfaptin homology (AH) domain/BAR domain"/>
    <property type="match status" value="1"/>
</dbReference>
<dbReference type="Gene3D" id="2.30.29.30">
    <property type="entry name" value="Pleckstrin-homology domain (PH domain)/Phosphotyrosine-binding domain (PTB)"/>
    <property type="match status" value="1"/>
</dbReference>
<dbReference type="Gene3D" id="1.10.555.10">
    <property type="entry name" value="Rho GTPase activation protein"/>
    <property type="match status" value="1"/>
</dbReference>
<dbReference type="Gene3D" id="2.30.30.40">
    <property type="entry name" value="SH3 Domains"/>
    <property type="match status" value="1"/>
</dbReference>
<dbReference type="InterPro" id="IPR027267">
    <property type="entry name" value="AH/BAR_dom_sf"/>
</dbReference>
<dbReference type="InterPro" id="IPR004148">
    <property type="entry name" value="BAR_dom"/>
</dbReference>
<dbReference type="InterPro" id="IPR035483">
    <property type="entry name" value="GRAF_BAR"/>
</dbReference>
<dbReference type="InterPro" id="IPR047234">
    <property type="entry name" value="GRAF_fam"/>
</dbReference>
<dbReference type="InterPro" id="IPR035481">
    <property type="entry name" value="GRAF_SH3"/>
</dbReference>
<dbReference type="InterPro" id="IPR011993">
    <property type="entry name" value="PH-like_dom_sf"/>
</dbReference>
<dbReference type="InterPro" id="IPR001849">
    <property type="entry name" value="PH_domain"/>
</dbReference>
<dbReference type="InterPro" id="IPR047225">
    <property type="entry name" value="PH_GRAF"/>
</dbReference>
<dbReference type="InterPro" id="IPR008936">
    <property type="entry name" value="Rho_GTPase_activation_prot"/>
</dbReference>
<dbReference type="InterPro" id="IPR000198">
    <property type="entry name" value="RhoGAP_dom"/>
</dbReference>
<dbReference type="InterPro" id="IPR036028">
    <property type="entry name" value="SH3-like_dom_sf"/>
</dbReference>
<dbReference type="InterPro" id="IPR001452">
    <property type="entry name" value="SH3_domain"/>
</dbReference>
<dbReference type="PANTHER" id="PTHR12552">
    <property type="entry name" value="OLIGOPHRENIN 1"/>
    <property type="match status" value="1"/>
</dbReference>
<dbReference type="PANTHER" id="PTHR12552:SF4">
    <property type="entry name" value="RHO GTPASE-ACTIVATING PROTEIN 26"/>
    <property type="match status" value="1"/>
</dbReference>
<dbReference type="Pfam" id="PF16746">
    <property type="entry name" value="BAR_3"/>
    <property type="match status" value="1"/>
</dbReference>
<dbReference type="Pfam" id="PF00169">
    <property type="entry name" value="PH"/>
    <property type="match status" value="1"/>
</dbReference>
<dbReference type="Pfam" id="PF00620">
    <property type="entry name" value="RhoGAP"/>
    <property type="match status" value="1"/>
</dbReference>
<dbReference type="Pfam" id="PF14604">
    <property type="entry name" value="SH3_9"/>
    <property type="match status" value="1"/>
</dbReference>
<dbReference type="SMART" id="SM00233">
    <property type="entry name" value="PH"/>
    <property type="match status" value="1"/>
</dbReference>
<dbReference type="SMART" id="SM00324">
    <property type="entry name" value="RhoGAP"/>
    <property type="match status" value="1"/>
</dbReference>
<dbReference type="SMART" id="SM00326">
    <property type="entry name" value="SH3"/>
    <property type="match status" value="1"/>
</dbReference>
<dbReference type="SUPFAM" id="SSF103657">
    <property type="entry name" value="BAR/IMD domain-like"/>
    <property type="match status" value="1"/>
</dbReference>
<dbReference type="SUPFAM" id="SSF48350">
    <property type="entry name" value="GTPase activation domain, GAP"/>
    <property type="match status" value="1"/>
</dbReference>
<dbReference type="SUPFAM" id="SSF50729">
    <property type="entry name" value="PH domain-like"/>
    <property type="match status" value="1"/>
</dbReference>
<dbReference type="SUPFAM" id="SSF50044">
    <property type="entry name" value="SH3-domain"/>
    <property type="match status" value="1"/>
</dbReference>
<dbReference type="PROSITE" id="PS50003">
    <property type="entry name" value="PH_DOMAIN"/>
    <property type="match status" value="1"/>
</dbReference>
<dbReference type="PROSITE" id="PS50238">
    <property type="entry name" value="RHOGAP"/>
    <property type="match status" value="1"/>
</dbReference>
<dbReference type="PROSITE" id="PS50002">
    <property type="entry name" value="SH3"/>
    <property type="match status" value="1"/>
</dbReference>
<gene>
    <name type="primary">arhgap26</name>
</gene>
<proteinExistence type="evidence at transcript level"/>
<accession>B5DFQ4</accession>
<accession>B1H128</accession>
<name>RHG26_XENTR</name>
<protein>
    <recommendedName>
        <fullName>Rho GTPase-activating protein 26</fullName>
    </recommendedName>
    <alternativeName>
        <fullName>Rho-type GTPase-activating protein 26</fullName>
    </alternativeName>
</protein>
<sequence>MGLPPLEFSDCYLDSPQFRERLKSHEIELDKTNKFIKELIKDGKSLVAAHKNLSCAKRKFAGSLNEFKFRCIGDAETDDEICIARSLQEFAAVLGNLEDERIRMIDNSGEVLISPLEKFRKEQVGAAKEVKKKYDKESEKYCAMLEKHMNLSSKKKEVLLHEADVQLDQMRQHFYEVSLEYVLKVHEVQERKMFEFVEPLLAFLQGLFTFYHHGYELAKDFSDFKTQLSISIQNTRDRFEGTRSEVESLMKKMKENPHEHLALSPYTMEGYLYVQEKRHFGTSWVKHYCTYQRETKQMTMVPFDQKSGGKVGEEEIIHLKSCIRRKTESIEKRFCFDVEGVDRPTVLTMQALSEEDRKLWMEAMDGREPVYNSNKDSQSEGTAQLDNIGFSIIRKCIQAVETRGINEQGLYRIVGVNSRVQKLLNFLMDPKISPETETEIPSEWEIKTITSSLKTYLRMLPGPLMTYQFQRSFIKAAKLENQESRIKEIHCLIHRLPEKNRQMLNLLMTHLANVAAHHKQNLMTVANLGIVFGPTLLRPQEETVAAIMDIKFQNIVVEIIIENYEKMFSTVPEMPQTNSQLHLSRKRSSDSKPPSCSERPLTLFHTTHNTEKEEKRNSVNSSAESVSSSNANSSANSTCTQCSNMNNLNASDPDLDVAKASRPNSLSLNPSPTSPPTCPMFSAPSSPMPTSSTSSDSSPVSVPRKAKALYACKAEHDSELSFSAGTVFDNVYPSQEPGWLEGILNGKTGLIPENYVEFL</sequence>
<feature type="chain" id="PRO_0000355555" description="Rho GTPase-activating protein 26">
    <location>
        <begin position="1"/>
        <end position="759"/>
    </location>
</feature>
<feature type="domain" description="BAR" evidence="2">
    <location>
        <begin position="7"/>
        <end position="262"/>
    </location>
</feature>
<feature type="domain" description="PH" evidence="4">
    <location>
        <begin position="265"/>
        <end position="369"/>
    </location>
</feature>
<feature type="domain" description="Rho-GAP" evidence="5">
    <location>
        <begin position="383"/>
        <end position="568"/>
    </location>
</feature>
<feature type="domain" description="SH3" evidence="6">
    <location>
        <begin position="701"/>
        <end position="759"/>
    </location>
</feature>
<feature type="region of interest" description="Disordered" evidence="7">
    <location>
        <begin position="578"/>
        <end position="701"/>
    </location>
</feature>
<feature type="compositionally biased region" description="Basic and acidic residues" evidence="7">
    <location>
        <begin position="608"/>
        <end position="617"/>
    </location>
</feature>
<feature type="compositionally biased region" description="Low complexity" evidence="7">
    <location>
        <begin position="618"/>
        <end position="637"/>
    </location>
</feature>
<feature type="compositionally biased region" description="Polar residues" evidence="7">
    <location>
        <begin position="638"/>
        <end position="650"/>
    </location>
</feature>
<feature type="compositionally biased region" description="Low complexity" evidence="7">
    <location>
        <begin position="679"/>
        <end position="701"/>
    </location>
</feature>
<feature type="site" description="Arginine finger; crucial for GTP hydrolysis by stabilizing the transition state" evidence="5">
    <location>
        <position position="412"/>
    </location>
</feature>
<feature type="splice variant" id="VSP_035910" description="In isoform 2." evidence="8">
    <original>N</original>
    <variation>K</variation>
    <location>
        <position position="513"/>
    </location>
</feature>
<feature type="splice variant" id="VSP_035911" description="In isoform 2." evidence="8">
    <location>
        <begin position="514"/>
        <end position="759"/>
    </location>
</feature>